<organism>
    <name type="scientific">Drosophila pseudoobscura pseudoobscura</name>
    <name type="common">Fruit fly</name>
    <dbReference type="NCBI Taxonomy" id="46245"/>
    <lineage>
        <taxon>Eukaryota</taxon>
        <taxon>Metazoa</taxon>
        <taxon>Ecdysozoa</taxon>
        <taxon>Arthropoda</taxon>
        <taxon>Hexapoda</taxon>
        <taxon>Insecta</taxon>
        <taxon>Pterygota</taxon>
        <taxon>Neoptera</taxon>
        <taxon>Endopterygota</taxon>
        <taxon>Diptera</taxon>
        <taxon>Brachycera</taxon>
        <taxon>Muscomorpha</taxon>
        <taxon>Ephydroidea</taxon>
        <taxon>Drosophilidae</taxon>
        <taxon>Drosophila</taxon>
        <taxon>Sophophora</taxon>
    </lineage>
</organism>
<comment type="similarity">
    <text evidence="3">Belongs to the LovG family.</text>
</comment>
<dbReference type="EC" id="3.1.2.-" evidence="3"/>
<dbReference type="EMBL" id="CM000070">
    <property type="protein sequence ID" value="EAL26934.1"/>
    <property type="molecule type" value="Genomic_DNA"/>
</dbReference>
<dbReference type="SMR" id="Q29BR3"/>
<dbReference type="FunCoup" id="Q29BR3">
    <property type="interactions" value="1189"/>
</dbReference>
<dbReference type="STRING" id="46245.Q29BR3"/>
<dbReference type="ESTHER" id="drops-q29br3">
    <property type="family name" value="FSH1"/>
</dbReference>
<dbReference type="eggNOG" id="KOG2551">
    <property type="taxonomic scope" value="Eukaryota"/>
</dbReference>
<dbReference type="HOGENOM" id="CLU_051938_2_3_1"/>
<dbReference type="InParanoid" id="Q29BR3"/>
<dbReference type="OMA" id="EEPRGWW"/>
<dbReference type="PhylomeDB" id="Q29BR3"/>
<dbReference type="Proteomes" id="UP000001819">
    <property type="component" value="Unplaced"/>
</dbReference>
<dbReference type="GO" id="GO:0005737">
    <property type="term" value="C:cytoplasm"/>
    <property type="evidence" value="ECO:0007669"/>
    <property type="project" value="TreeGrafter"/>
</dbReference>
<dbReference type="GO" id="GO:0005634">
    <property type="term" value="C:nucleus"/>
    <property type="evidence" value="ECO:0007669"/>
    <property type="project" value="TreeGrafter"/>
</dbReference>
<dbReference type="GO" id="GO:0016787">
    <property type="term" value="F:hydrolase activity"/>
    <property type="evidence" value="ECO:0007669"/>
    <property type="project" value="UniProtKB-KW"/>
</dbReference>
<dbReference type="GO" id="GO:0032526">
    <property type="term" value="P:response to retinoic acid"/>
    <property type="evidence" value="ECO:0007669"/>
    <property type="project" value="TreeGrafter"/>
</dbReference>
<dbReference type="FunFam" id="3.40.50.1820:FF:000073">
    <property type="entry name" value="esterase OVCA2 isoform X6"/>
    <property type="match status" value="1"/>
</dbReference>
<dbReference type="Gene3D" id="3.40.50.1820">
    <property type="entry name" value="alpha/beta hydrolase"/>
    <property type="match status" value="1"/>
</dbReference>
<dbReference type="InterPro" id="IPR029058">
    <property type="entry name" value="AB_hydrolase_fold"/>
</dbReference>
<dbReference type="InterPro" id="IPR005645">
    <property type="entry name" value="FSH-like_dom"/>
</dbReference>
<dbReference type="InterPro" id="IPR050593">
    <property type="entry name" value="LovG"/>
</dbReference>
<dbReference type="PANTHER" id="PTHR48070">
    <property type="entry name" value="ESTERASE OVCA2"/>
    <property type="match status" value="1"/>
</dbReference>
<dbReference type="PANTHER" id="PTHR48070:SF6">
    <property type="entry name" value="ESTERASE OVCA2"/>
    <property type="match status" value="1"/>
</dbReference>
<dbReference type="Pfam" id="PF03959">
    <property type="entry name" value="FSH1"/>
    <property type="match status" value="1"/>
</dbReference>
<dbReference type="SUPFAM" id="SSF53474">
    <property type="entry name" value="alpha/beta-Hydrolases"/>
    <property type="match status" value="1"/>
</dbReference>
<evidence type="ECO:0000250" key="1">
    <source>
        <dbReference type="UniProtKB" id="P38777"/>
    </source>
</evidence>
<evidence type="ECO:0000256" key="2">
    <source>
        <dbReference type="SAM" id="MobiDB-lite"/>
    </source>
</evidence>
<evidence type="ECO:0000305" key="3"/>
<keyword id="KW-0378">Hydrolase</keyword>
<keyword id="KW-1185">Reference proteome</keyword>
<gene>
    <name type="ORF">GA18864</name>
</gene>
<sequence length="289" mass="31368">MTNNDAAVEAPSSSRASSSKQQPKLEITEKVRVLCLHGYRQDGDAFKNKLGSFRKFTSKYAEFVFISAPHIAAPLESAAEPVPEQRSWWANKDDGTFKGTNKGGPAFGFQDSLRLVEEAWKTQGPFQGLLGFSQGACFVGLICGLAKKKLTSIRPEFAVLSSGFVSGSLVHMSAYEEPVSIPTLHIYGSSDEIIPKDMSALLASHFKNVEVLEHGGGHYFPATAQQKQTYINFFQDRLQEYLEHLELQQSSSVSFIESGAEDNDDDGDANDAEVAAATAAAGSDLDDSD</sequence>
<proteinExistence type="inferred from homology"/>
<name>LOVG_DROPS</name>
<accession>Q29BR3</accession>
<feature type="chain" id="PRO_0000300882" description="Esterase GA18864">
    <location>
        <begin position="1"/>
        <end position="289"/>
    </location>
</feature>
<feature type="region of interest" description="Disordered" evidence="2">
    <location>
        <begin position="1"/>
        <end position="24"/>
    </location>
</feature>
<feature type="region of interest" description="Disordered" evidence="2">
    <location>
        <begin position="253"/>
        <end position="289"/>
    </location>
</feature>
<feature type="compositionally biased region" description="Low complexity" evidence="2">
    <location>
        <begin position="1"/>
        <end position="19"/>
    </location>
</feature>
<feature type="compositionally biased region" description="Acidic residues" evidence="2">
    <location>
        <begin position="259"/>
        <end position="271"/>
    </location>
</feature>
<feature type="compositionally biased region" description="Low complexity" evidence="2">
    <location>
        <begin position="272"/>
        <end position="283"/>
    </location>
</feature>
<feature type="active site" description="Charge relay system" evidence="1">
    <location>
        <position position="133"/>
    </location>
</feature>
<feature type="active site" description="Charge relay system" evidence="1">
    <location>
        <position position="191"/>
    </location>
</feature>
<feature type="active site" description="Charge relay system" evidence="1">
    <location>
        <position position="218"/>
    </location>
</feature>
<reference key="1">
    <citation type="journal article" date="2005" name="Genome Res.">
        <title>Comparative genome sequencing of Drosophila pseudoobscura: chromosomal, gene, and cis-element evolution.</title>
        <authorList>
            <person name="Richards S."/>
            <person name="Liu Y."/>
            <person name="Bettencourt B.R."/>
            <person name="Hradecky P."/>
            <person name="Letovsky S."/>
            <person name="Nielsen R."/>
            <person name="Thornton K."/>
            <person name="Hubisz M.J."/>
            <person name="Chen R."/>
            <person name="Meisel R.P."/>
            <person name="Couronne O."/>
            <person name="Hua S."/>
            <person name="Smith M.A."/>
            <person name="Zhang P."/>
            <person name="Liu J."/>
            <person name="Bussemaker H.J."/>
            <person name="van Batenburg M.F."/>
            <person name="Howells S.L."/>
            <person name="Scherer S.E."/>
            <person name="Sodergren E."/>
            <person name="Matthews B.B."/>
            <person name="Crosby M.A."/>
            <person name="Schroeder A.J."/>
            <person name="Ortiz-Barrientos D."/>
            <person name="Rives C.M."/>
            <person name="Metzker M.L."/>
            <person name="Muzny D.M."/>
            <person name="Scott G."/>
            <person name="Steffen D."/>
            <person name="Wheeler D.A."/>
            <person name="Worley K.C."/>
            <person name="Havlak P."/>
            <person name="Durbin K.J."/>
            <person name="Egan A."/>
            <person name="Gill R."/>
            <person name="Hume J."/>
            <person name="Morgan M.B."/>
            <person name="Miner G."/>
            <person name="Hamilton C."/>
            <person name="Huang Y."/>
            <person name="Waldron L."/>
            <person name="Verduzco D."/>
            <person name="Clerc-Blankenburg K.P."/>
            <person name="Dubchak I."/>
            <person name="Noor M.A.F."/>
            <person name="Anderson W."/>
            <person name="White K.P."/>
            <person name="Clark A.G."/>
            <person name="Schaeffer S.W."/>
            <person name="Gelbart W.M."/>
            <person name="Weinstock G.M."/>
            <person name="Gibbs R.A."/>
        </authorList>
    </citation>
    <scope>NUCLEOTIDE SEQUENCE [LARGE SCALE GENOMIC DNA]</scope>
    <source>
        <strain>MV2-25 / Tucson 14011-0121.94</strain>
    </source>
</reference>
<protein>
    <recommendedName>
        <fullName>Esterase GA18864</fullName>
        <ecNumber evidence="3">3.1.2.-</ecNumber>
    </recommendedName>
</protein>